<dbReference type="EC" id="2.8.1.8" evidence="1"/>
<dbReference type="EMBL" id="CP000730">
    <property type="protein sequence ID" value="ABX28906.1"/>
    <property type="molecule type" value="Genomic_DNA"/>
</dbReference>
<dbReference type="RefSeq" id="WP_000201875.1">
    <property type="nucleotide sequence ID" value="NC_010079.1"/>
</dbReference>
<dbReference type="SMR" id="A8Z1I3"/>
<dbReference type="GeneID" id="98345243"/>
<dbReference type="KEGG" id="sax:USA300HOU_0885"/>
<dbReference type="HOGENOM" id="CLU_033144_2_1_9"/>
<dbReference type="GO" id="GO:0005737">
    <property type="term" value="C:cytoplasm"/>
    <property type="evidence" value="ECO:0007669"/>
    <property type="project" value="UniProtKB-SubCell"/>
</dbReference>
<dbReference type="GO" id="GO:0051539">
    <property type="term" value="F:4 iron, 4 sulfur cluster binding"/>
    <property type="evidence" value="ECO:0007669"/>
    <property type="project" value="UniProtKB-UniRule"/>
</dbReference>
<dbReference type="GO" id="GO:0016992">
    <property type="term" value="F:lipoate synthase activity"/>
    <property type="evidence" value="ECO:0007669"/>
    <property type="project" value="UniProtKB-UniRule"/>
</dbReference>
<dbReference type="GO" id="GO:0046872">
    <property type="term" value="F:metal ion binding"/>
    <property type="evidence" value="ECO:0007669"/>
    <property type="project" value="UniProtKB-KW"/>
</dbReference>
<dbReference type="CDD" id="cd01335">
    <property type="entry name" value="Radical_SAM"/>
    <property type="match status" value="1"/>
</dbReference>
<dbReference type="FunFam" id="3.20.20.70:FF:000040">
    <property type="entry name" value="Lipoyl synthase"/>
    <property type="match status" value="1"/>
</dbReference>
<dbReference type="Gene3D" id="3.20.20.70">
    <property type="entry name" value="Aldolase class I"/>
    <property type="match status" value="1"/>
</dbReference>
<dbReference type="HAMAP" id="MF_00206">
    <property type="entry name" value="Lipoyl_synth"/>
    <property type="match status" value="1"/>
</dbReference>
<dbReference type="InterPro" id="IPR013785">
    <property type="entry name" value="Aldolase_TIM"/>
</dbReference>
<dbReference type="InterPro" id="IPR006638">
    <property type="entry name" value="Elp3/MiaA/NifB-like_rSAM"/>
</dbReference>
<dbReference type="InterPro" id="IPR031691">
    <property type="entry name" value="LIAS_N"/>
</dbReference>
<dbReference type="InterPro" id="IPR003698">
    <property type="entry name" value="Lipoyl_synth"/>
</dbReference>
<dbReference type="InterPro" id="IPR007197">
    <property type="entry name" value="rSAM"/>
</dbReference>
<dbReference type="NCBIfam" id="TIGR00510">
    <property type="entry name" value="lipA"/>
    <property type="match status" value="1"/>
</dbReference>
<dbReference type="NCBIfam" id="NF004019">
    <property type="entry name" value="PRK05481.1"/>
    <property type="match status" value="1"/>
</dbReference>
<dbReference type="NCBIfam" id="NF009544">
    <property type="entry name" value="PRK12928.1"/>
    <property type="match status" value="1"/>
</dbReference>
<dbReference type="PANTHER" id="PTHR10949">
    <property type="entry name" value="LIPOYL SYNTHASE"/>
    <property type="match status" value="1"/>
</dbReference>
<dbReference type="PANTHER" id="PTHR10949:SF0">
    <property type="entry name" value="LIPOYL SYNTHASE, MITOCHONDRIAL"/>
    <property type="match status" value="1"/>
</dbReference>
<dbReference type="Pfam" id="PF16881">
    <property type="entry name" value="LIAS_N"/>
    <property type="match status" value="1"/>
</dbReference>
<dbReference type="Pfam" id="PF04055">
    <property type="entry name" value="Radical_SAM"/>
    <property type="match status" value="1"/>
</dbReference>
<dbReference type="PIRSF" id="PIRSF005963">
    <property type="entry name" value="Lipoyl_synth"/>
    <property type="match status" value="1"/>
</dbReference>
<dbReference type="SFLD" id="SFLDF00271">
    <property type="entry name" value="lipoyl_synthase"/>
    <property type="match status" value="1"/>
</dbReference>
<dbReference type="SFLD" id="SFLDS00029">
    <property type="entry name" value="Radical_SAM"/>
    <property type="match status" value="1"/>
</dbReference>
<dbReference type="SMART" id="SM00729">
    <property type="entry name" value="Elp3"/>
    <property type="match status" value="1"/>
</dbReference>
<dbReference type="SUPFAM" id="SSF102114">
    <property type="entry name" value="Radical SAM enzymes"/>
    <property type="match status" value="1"/>
</dbReference>
<dbReference type="PROSITE" id="PS51918">
    <property type="entry name" value="RADICAL_SAM"/>
    <property type="match status" value="1"/>
</dbReference>
<feature type="chain" id="PRO_1000077974" description="Lipoyl synthase">
    <location>
        <begin position="1"/>
        <end position="305"/>
    </location>
</feature>
<feature type="domain" description="Radical SAM core" evidence="2">
    <location>
        <begin position="54"/>
        <end position="270"/>
    </location>
</feature>
<feature type="region of interest" description="Disordered" evidence="3">
    <location>
        <begin position="283"/>
        <end position="305"/>
    </location>
</feature>
<feature type="compositionally biased region" description="Basic and acidic residues" evidence="3">
    <location>
        <begin position="283"/>
        <end position="298"/>
    </location>
</feature>
<feature type="binding site" evidence="1">
    <location>
        <position position="41"/>
    </location>
    <ligand>
        <name>[4Fe-4S] cluster</name>
        <dbReference type="ChEBI" id="CHEBI:49883"/>
        <label>1</label>
    </ligand>
</feature>
<feature type="binding site" evidence="1">
    <location>
        <position position="46"/>
    </location>
    <ligand>
        <name>[4Fe-4S] cluster</name>
        <dbReference type="ChEBI" id="CHEBI:49883"/>
        <label>1</label>
    </ligand>
</feature>
<feature type="binding site" evidence="1">
    <location>
        <position position="52"/>
    </location>
    <ligand>
        <name>[4Fe-4S] cluster</name>
        <dbReference type="ChEBI" id="CHEBI:49883"/>
        <label>1</label>
    </ligand>
</feature>
<feature type="binding site" evidence="1">
    <location>
        <position position="68"/>
    </location>
    <ligand>
        <name>[4Fe-4S] cluster</name>
        <dbReference type="ChEBI" id="CHEBI:49883"/>
        <label>2</label>
        <note>4Fe-4S-S-AdoMet</note>
    </ligand>
</feature>
<feature type="binding site" evidence="1">
    <location>
        <position position="72"/>
    </location>
    <ligand>
        <name>[4Fe-4S] cluster</name>
        <dbReference type="ChEBI" id="CHEBI:49883"/>
        <label>2</label>
        <note>4Fe-4S-S-AdoMet</note>
    </ligand>
</feature>
<feature type="binding site" evidence="1">
    <location>
        <position position="75"/>
    </location>
    <ligand>
        <name>[4Fe-4S] cluster</name>
        <dbReference type="ChEBI" id="CHEBI:49883"/>
        <label>2</label>
        <note>4Fe-4S-S-AdoMet</note>
    </ligand>
</feature>
<feature type="binding site" evidence="1">
    <location>
        <position position="281"/>
    </location>
    <ligand>
        <name>[4Fe-4S] cluster</name>
        <dbReference type="ChEBI" id="CHEBI:49883"/>
        <label>1</label>
    </ligand>
</feature>
<name>LIPA_STAAT</name>
<gene>
    <name evidence="1" type="primary">lipA</name>
    <name type="ordered locus">USA300HOU_0885</name>
</gene>
<comment type="function">
    <text evidence="1">Catalyzes the radical-mediated insertion of two sulfur atoms into the C-6 and C-8 positions of the octanoyl moiety bound to the lipoyl domains of lipoate-dependent enzymes, thereby converting the octanoylated domains into lipoylated derivatives.</text>
</comment>
<comment type="catalytic activity">
    <reaction evidence="1">
        <text>[[Fe-S] cluster scaffold protein carrying a second [4Fe-4S](2+) cluster] + N(6)-octanoyl-L-lysyl-[protein] + 2 oxidized [2Fe-2S]-[ferredoxin] + 2 S-adenosyl-L-methionine + 4 H(+) = [[Fe-S] cluster scaffold protein] + N(6)-[(R)-dihydrolipoyl]-L-lysyl-[protein] + 4 Fe(3+) + 2 hydrogen sulfide + 2 5'-deoxyadenosine + 2 L-methionine + 2 reduced [2Fe-2S]-[ferredoxin]</text>
        <dbReference type="Rhea" id="RHEA:16585"/>
        <dbReference type="Rhea" id="RHEA-COMP:9928"/>
        <dbReference type="Rhea" id="RHEA-COMP:10000"/>
        <dbReference type="Rhea" id="RHEA-COMP:10001"/>
        <dbReference type="Rhea" id="RHEA-COMP:10475"/>
        <dbReference type="Rhea" id="RHEA-COMP:14568"/>
        <dbReference type="Rhea" id="RHEA-COMP:14569"/>
        <dbReference type="ChEBI" id="CHEBI:15378"/>
        <dbReference type="ChEBI" id="CHEBI:17319"/>
        <dbReference type="ChEBI" id="CHEBI:29034"/>
        <dbReference type="ChEBI" id="CHEBI:29919"/>
        <dbReference type="ChEBI" id="CHEBI:33722"/>
        <dbReference type="ChEBI" id="CHEBI:33737"/>
        <dbReference type="ChEBI" id="CHEBI:33738"/>
        <dbReference type="ChEBI" id="CHEBI:57844"/>
        <dbReference type="ChEBI" id="CHEBI:59789"/>
        <dbReference type="ChEBI" id="CHEBI:78809"/>
        <dbReference type="ChEBI" id="CHEBI:83100"/>
        <dbReference type="EC" id="2.8.1.8"/>
    </reaction>
</comment>
<comment type="cofactor">
    <cofactor evidence="1">
        <name>[4Fe-4S] cluster</name>
        <dbReference type="ChEBI" id="CHEBI:49883"/>
    </cofactor>
    <text evidence="1">Binds 2 [4Fe-4S] clusters per subunit. One cluster is coordinated with 3 cysteines and an exchangeable S-adenosyl-L-methionine.</text>
</comment>
<comment type="pathway">
    <text evidence="1">Protein modification; protein lipoylation via endogenous pathway; protein N(6)-(lipoyl)lysine from octanoyl-[acyl-carrier-protein].</text>
</comment>
<comment type="subcellular location">
    <subcellularLocation>
        <location evidence="1">Cytoplasm</location>
    </subcellularLocation>
</comment>
<comment type="similarity">
    <text evidence="1">Belongs to the radical SAM superfamily. Lipoyl synthase family.</text>
</comment>
<evidence type="ECO:0000255" key="1">
    <source>
        <dbReference type="HAMAP-Rule" id="MF_00206"/>
    </source>
</evidence>
<evidence type="ECO:0000255" key="2">
    <source>
        <dbReference type="PROSITE-ProRule" id="PRU01266"/>
    </source>
</evidence>
<evidence type="ECO:0000256" key="3">
    <source>
        <dbReference type="SAM" id="MobiDB-lite"/>
    </source>
</evidence>
<proteinExistence type="inferred from homology"/>
<sequence>MATKNEEILRKPDWLKIKLNTNENYTGLKKMMREKNLNTVCEEAKCPNIHECWGARRTATFMILGAVCTRACRFCAVKTGLPNELDLNEPERVAESVELMNLKHVVITAVARDDLRDAGSNVYAETVRKVRERNPFTTIEILPSDMGGDYDALETLMASRPDILNHNIETVRRLTPRVRARATYDRTLEFLRRSKELQPDIPTKSSIMVGLGETIEEIYETMDDLRANDVDILTIGQYLQPSRKHLKVQKYYTPLEFGKLRKVAMDKGFKHCQAGPLVRSSYHADEQVNEAAKEKQRQGEAQLNS</sequence>
<organism>
    <name type="scientific">Staphylococcus aureus (strain USA300 / TCH1516)</name>
    <dbReference type="NCBI Taxonomy" id="451516"/>
    <lineage>
        <taxon>Bacteria</taxon>
        <taxon>Bacillati</taxon>
        <taxon>Bacillota</taxon>
        <taxon>Bacilli</taxon>
        <taxon>Bacillales</taxon>
        <taxon>Staphylococcaceae</taxon>
        <taxon>Staphylococcus</taxon>
    </lineage>
</organism>
<protein>
    <recommendedName>
        <fullName evidence="1">Lipoyl synthase</fullName>
        <ecNumber evidence="1">2.8.1.8</ecNumber>
    </recommendedName>
    <alternativeName>
        <fullName evidence="1">Lip-syn</fullName>
        <shortName evidence="1">LS</shortName>
    </alternativeName>
    <alternativeName>
        <fullName evidence="1">Lipoate synthase</fullName>
    </alternativeName>
    <alternativeName>
        <fullName evidence="1">Lipoic acid synthase</fullName>
    </alternativeName>
    <alternativeName>
        <fullName evidence="1">Sulfur insertion protein LipA</fullName>
    </alternativeName>
</protein>
<reference key="1">
    <citation type="journal article" date="2007" name="BMC Microbiol.">
        <title>Subtle genetic changes enhance virulence of methicillin resistant and sensitive Staphylococcus aureus.</title>
        <authorList>
            <person name="Highlander S.K."/>
            <person name="Hulten K.G."/>
            <person name="Qin X."/>
            <person name="Jiang H."/>
            <person name="Yerrapragada S."/>
            <person name="Mason E.O. Jr."/>
            <person name="Shang Y."/>
            <person name="Williams T.M."/>
            <person name="Fortunov R.M."/>
            <person name="Liu Y."/>
            <person name="Igboeli O."/>
            <person name="Petrosino J."/>
            <person name="Tirumalai M."/>
            <person name="Uzman A."/>
            <person name="Fox G.E."/>
            <person name="Cardenas A.M."/>
            <person name="Muzny D.M."/>
            <person name="Hemphill L."/>
            <person name="Ding Y."/>
            <person name="Dugan S."/>
            <person name="Blyth P.R."/>
            <person name="Buhay C.J."/>
            <person name="Dinh H.H."/>
            <person name="Hawes A.C."/>
            <person name="Holder M."/>
            <person name="Kovar C.L."/>
            <person name="Lee S.L."/>
            <person name="Liu W."/>
            <person name="Nazareth L.V."/>
            <person name="Wang Q."/>
            <person name="Zhou J."/>
            <person name="Kaplan S.L."/>
            <person name="Weinstock G.M."/>
        </authorList>
    </citation>
    <scope>NUCLEOTIDE SEQUENCE [LARGE SCALE GENOMIC DNA]</scope>
    <source>
        <strain>USA300 / TCH1516</strain>
    </source>
</reference>
<accession>A8Z1I3</accession>
<keyword id="KW-0004">4Fe-4S</keyword>
<keyword id="KW-0963">Cytoplasm</keyword>
<keyword id="KW-0408">Iron</keyword>
<keyword id="KW-0411">Iron-sulfur</keyword>
<keyword id="KW-0479">Metal-binding</keyword>
<keyword id="KW-0949">S-adenosyl-L-methionine</keyword>
<keyword id="KW-0808">Transferase</keyword>